<name>ACP_SALPB</name>
<protein>
    <recommendedName>
        <fullName evidence="1">Acyl carrier protein</fullName>
        <shortName evidence="1">ACP</shortName>
    </recommendedName>
</protein>
<keyword id="KW-0963">Cytoplasm</keyword>
<keyword id="KW-0275">Fatty acid biosynthesis</keyword>
<keyword id="KW-0276">Fatty acid metabolism</keyword>
<keyword id="KW-0444">Lipid biosynthesis</keyword>
<keyword id="KW-0443">Lipid metabolism</keyword>
<keyword id="KW-0596">Phosphopantetheine</keyword>
<keyword id="KW-0597">Phosphoprotein</keyword>
<organism>
    <name type="scientific">Salmonella paratyphi B (strain ATCC BAA-1250 / SPB7)</name>
    <dbReference type="NCBI Taxonomy" id="1016998"/>
    <lineage>
        <taxon>Bacteria</taxon>
        <taxon>Pseudomonadati</taxon>
        <taxon>Pseudomonadota</taxon>
        <taxon>Gammaproteobacteria</taxon>
        <taxon>Enterobacterales</taxon>
        <taxon>Enterobacteriaceae</taxon>
        <taxon>Salmonella</taxon>
    </lineage>
</organism>
<reference key="1">
    <citation type="submission" date="2007-11" db="EMBL/GenBank/DDBJ databases">
        <authorList>
            <consortium name="The Salmonella enterica serovar Paratyphi B Genome Sequencing Project"/>
            <person name="McClelland M."/>
            <person name="Sanderson E.K."/>
            <person name="Porwollik S."/>
            <person name="Spieth J."/>
            <person name="Clifton W.S."/>
            <person name="Fulton R."/>
            <person name="Cordes M."/>
            <person name="Wollam A."/>
            <person name="Shah N."/>
            <person name="Pepin K."/>
            <person name="Bhonagiri V."/>
            <person name="Nash W."/>
            <person name="Johnson M."/>
            <person name="Thiruvilangam P."/>
            <person name="Wilson R."/>
        </authorList>
    </citation>
    <scope>NUCLEOTIDE SEQUENCE [LARGE SCALE GENOMIC DNA]</scope>
    <source>
        <strain>ATCC BAA-1250 / SPB7</strain>
    </source>
</reference>
<gene>
    <name evidence="1" type="primary">acpP</name>
    <name type="ordered locus">SPAB_02327</name>
</gene>
<feature type="chain" id="PRO_1000085612" description="Acyl carrier protein">
    <location>
        <begin position="1"/>
        <end position="78"/>
    </location>
</feature>
<feature type="domain" description="Carrier" evidence="2">
    <location>
        <begin position="2"/>
        <end position="77"/>
    </location>
</feature>
<feature type="modified residue" description="O-(pantetheine 4'-phosphoryl)serine" evidence="2">
    <location>
        <position position="37"/>
    </location>
</feature>
<sequence length="78" mass="8640">MSTIEERVKKIIGEQLGVKQEEVTNNASFVEDLGADSLDTVELVMALEEEFDTEIPDEEAEKITTVQAAIDYINGHQA</sequence>
<dbReference type="EMBL" id="CP000886">
    <property type="protein sequence ID" value="ABX67710.1"/>
    <property type="molecule type" value="Genomic_DNA"/>
</dbReference>
<dbReference type="RefSeq" id="WP_000103754.1">
    <property type="nucleotide sequence ID" value="NC_010102.1"/>
</dbReference>
<dbReference type="BMRB" id="A9N5L0"/>
<dbReference type="SMR" id="A9N5L0"/>
<dbReference type="GeneID" id="98387866"/>
<dbReference type="KEGG" id="spq:SPAB_02327"/>
<dbReference type="PATRIC" id="fig|1016998.12.peg.2202"/>
<dbReference type="HOGENOM" id="CLU_108696_5_1_6"/>
<dbReference type="BioCyc" id="SENT1016998:SPAB_RS09470-MONOMER"/>
<dbReference type="UniPathway" id="UPA00094"/>
<dbReference type="Proteomes" id="UP000008556">
    <property type="component" value="Chromosome"/>
</dbReference>
<dbReference type="GO" id="GO:0005829">
    <property type="term" value="C:cytosol"/>
    <property type="evidence" value="ECO:0007669"/>
    <property type="project" value="TreeGrafter"/>
</dbReference>
<dbReference type="GO" id="GO:0016020">
    <property type="term" value="C:membrane"/>
    <property type="evidence" value="ECO:0007669"/>
    <property type="project" value="GOC"/>
</dbReference>
<dbReference type="GO" id="GO:0000035">
    <property type="term" value="F:acyl binding"/>
    <property type="evidence" value="ECO:0007669"/>
    <property type="project" value="TreeGrafter"/>
</dbReference>
<dbReference type="GO" id="GO:0000036">
    <property type="term" value="F:acyl carrier activity"/>
    <property type="evidence" value="ECO:0007669"/>
    <property type="project" value="UniProtKB-UniRule"/>
</dbReference>
<dbReference type="GO" id="GO:0009245">
    <property type="term" value="P:lipid A biosynthetic process"/>
    <property type="evidence" value="ECO:0007669"/>
    <property type="project" value="TreeGrafter"/>
</dbReference>
<dbReference type="FunFam" id="1.10.1200.10:FF:000001">
    <property type="entry name" value="Acyl carrier protein"/>
    <property type="match status" value="1"/>
</dbReference>
<dbReference type="Gene3D" id="1.10.1200.10">
    <property type="entry name" value="ACP-like"/>
    <property type="match status" value="1"/>
</dbReference>
<dbReference type="HAMAP" id="MF_01217">
    <property type="entry name" value="Acyl_carrier"/>
    <property type="match status" value="1"/>
</dbReference>
<dbReference type="InterPro" id="IPR003231">
    <property type="entry name" value="ACP"/>
</dbReference>
<dbReference type="InterPro" id="IPR036736">
    <property type="entry name" value="ACP-like_sf"/>
</dbReference>
<dbReference type="InterPro" id="IPR009081">
    <property type="entry name" value="PP-bd_ACP"/>
</dbReference>
<dbReference type="InterPro" id="IPR006162">
    <property type="entry name" value="Ppantetheine_attach_site"/>
</dbReference>
<dbReference type="NCBIfam" id="TIGR00517">
    <property type="entry name" value="acyl_carrier"/>
    <property type="match status" value="1"/>
</dbReference>
<dbReference type="NCBIfam" id="NF002148">
    <property type="entry name" value="PRK00982.1-2"/>
    <property type="match status" value="1"/>
</dbReference>
<dbReference type="NCBIfam" id="NF002149">
    <property type="entry name" value="PRK00982.1-3"/>
    <property type="match status" value="1"/>
</dbReference>
<dbReference type="NCBIfam" id="NF002150">
    <property type="entry name" value="PRK00982.1-4"/>
    <property type="match status" value="1"/>
</dbReference>
<dbReference type="NCBIfam" id="NF002151">
    <property type="entry name" value="PRK00982.1-5"/>
    <property type="match status" value="1"/>
</dbReference>
<dbReference type="PANTHER" id="PTHR20863">
    <property type="entry name" value="ACYL CARRIER PROTEIN"/>
    <property type="match status" value="1"/>
</dbReference>
<dbReference type="PANTHER" id="PTHR20863:SF76">
    <property type="entry name" value="CARRIER DOMAIN-CONTAINING PROTEIN"/>
    <property type="match status" value="1"/>
</dbReference>
<dbReference type="Pfam" id="PF00550">
    <property type="entry name" value="PP-binding"/>
    <property type="match status" value="1"/>
</dbReference>
<dbReference type="SUPFAM" id="SSF47336">
    <property type="entry name" value="ACP-like"/>
    <property type="match status" value="1"/>
</dbReference>
<dbReference type="PROSITE" id="PS50075">
    <property type="entry name" value="CARRIER"/>
    <property type="match status" value="1"/>
</dbReference>
<dbReference type="PROSITE" id="PS00012">
    <property type="entry name" value="PHOSPHOPANTETHEINE"/>
    <property type="match status" value="1"/>
</dbReference>
<accession>A9N5L0</accession>
<comment type="function">
    <text evidence="1">Carrier of the growing fatty acid chain in fatty acid biosynthesis.</text>
</comment>
<comment type="pathway">
    <text evidence="1">Lipid metabolism; fatty acid biosynthesis.</text>
</comment>
<comment type="subcellular location">
    <subcellularLocation>
        <location evidence="1">Cytoplasm</location>
    </subcellularLocation>
</comment>
<comment type="PTM">
    <text evidence="1">4'-phosphopantetheine is transferred from CoA to a specific serine of apo-ACP by AcpS. This modification is essential for activity because fatty acids are bound in thioester linkage to the sulfhydryl of the prosthetic group.</text>
</comment>
<comment type="similarity">
    <text evidence="1">Belongs to the acyl carrier protein (ACP) family.</text>
</comment>
<proteinExistence type="inferred from homology"/>
<evidence type="ECO:0000255" key="1">
    <source>
        <dbReference type="HAMAP-Rule" id="MF_01217"/>
    </source>
</evidence>
<evidence type="ECO:0000255" key="2">
    <source>
        <dbReference type="PROSITE-ProRule" id="PRU00258"/>
    </source>
</evidence>